<organism>
    <name type="scientific">Pseudomonas putida (strain W619)</name>
    <dbReference type="NCBI Taxonomy" id="390235"/>
    <lineage>
        <taxon>Bacteria</taxon>
        <taxon>Pseudomonadati</taxon>
        <taxon>Pseudomonadota</taxon>
        <taxon>Gammaproteobacteria</taxon>
        <taxon>Pseudomonadales</taxon>
        <taxon>Pseudomonadaceae</taxon>
        <taxon>Pseudomonas</taxon>
    </lineage>
</organism>
<reference key="1">
    <citation type="submission" date="2008-02" db="EMBL/GenBank/DDBJ databases">
        <title>Complete sequence of Pseudomonas putida W619.</title>
        <authorList>
            <person name="Copeland A."/>
            <person name="Lucas S."/>
            <person name="Lapidus A."/>
            <person name="Barry K."/>
            <person name="Detter J.C."/>
            <person name="Glavina del Rio T."/>
            <person name="Dalin E."/>
            <person name="Tice H."/>
            <person name="Pitluck S."/>
            <person name="Chain P."/>
            <person name="Malfatti S."/>
            <person name="Shin M."/>
            <person name="Vergez L."/>
            <person name="Schmutz J."/>
            <person name="Larimer F."/>
            <person name="Land M."/>
            <person name="Hauser L."/>
            <person name="Kyrpides N."/>
            <person name="Kim E."/>
            <person name="Taghavi S."/>
            <person name="Vangronsveld D."/>
            <person name="van der Lelie D."/>
            <person name="Richardson P."/>
        </authorList>
    </citation>
    <scope>NUCLEOTIDE SEQUENCE [LARGE SCALE GENOMIC DNA]</scope>
    <source>
        <strain>W619</strain>
    </source>
</reference>
<comment type="function">
    <text evidence="1">Catalyzes the NADPH-dependent rearrangement and reduction of 1-deoxy-D-xylulose-5-phosphate (DXP) to 2-C-methyl-D-erythritol 4-phosphate (MEP).</text>
</comment>
<comment type="catalytic activity">
    <reaction evidence="1">
        <text>2-C-methyl-D-erythritol 4-phosphate + NADP(+) = 1-deoxy-D-xylulose 5-phosphate + NADPH + H(+)</text>
        <dbReference type="Rhea" id="RHEA:13717"/>
        <dbReference type="ChEBI" id="CHEBI:15378"/>
        <dbReference type="ChEBI" id="CHEBI:57783"/>
        <dbReference type="ChEBI" id="CHEBI:57792"/>
        <dbReference type="ChEBI" id="CHEBI:58262"/>
        <dbReference type="ChEBI" id="CHEBI:58349"/>
        <dbReference type="EC" id="1.1.1.267"/>
    </reaction>
    <physiologicalReaction direction="right-to-left" evidence="1">
        <dbReference type="Rhea" id="RHEA:13719"/>
    </physiologicalReaction>
</comment>
<comment type="cofactor">
    <cofactor evidence="1">
        <name>Mg(2+)</name>
        <dbReference type="ChEBI" id="CHEBI:18420"/>
    </cofactor>
    <cofactor evidence="1">
        <name>Mn(2+)</name>
        <dbReference type="ChEBI" id="CHEBI:29035"/>
    </cofactor>
</comment>
<comment type="pathway">
    <text evidence="1">Isoprenoid biosynthesis; isopentenyl diphosphate biosynthesis via DXP pathway; isopentenyl diphosphate from 1-deoxy-D-xylulose 5-phosphate: step 1/6.</text>
</comment>
<comment type="similarity">
    <text evidence="1">Belongs to the DXR family.</text>
</comment>
<name>DXR_PSEPW</name>
<dbReference type="EC" id="1.1.1.267" evidence="1"/>
<dbReference type="EMBL" id="CP000949">
    <property type="protein sequence ID" value="ACA74556.1"/>
    <property type="molecule type" value="Genomic_DNA"/>
</dbReference>
<dbReference type="SMR" id="B1JBQ4"/>
<dbReference type="STRING" id="390235.PputW619_4076"/>
<dbReference type="KEGG" id="ppw:PputW619_4076"/>
<dbReference type="eggNOG" id="COG0743">
    <property type="taxonomic scope" value="Bacteria"/>
</dbReference>
<dbReference type="HOGENOM" id="CLU_035714_4_0_6"/>
<dbReference type="OrthoDB" id="9806546at2"/>
<dbReference type="UniPathway" id="UPA00056">
    <property type="reaction ID" value="UER00092"/>
</dbReference>
<dbReference type="GO" id="GO:0030604">
    <property type="term" value="F:1-deoxy-D-xylulose-5-phosphate reductoisomerase activity"/>
    <property type="evidence" value="ECO:0007669"/>
    <property type="project" value="UniProtKB-UniRule"/>
</dbReference>
<dbReference type="GO" id="GO:0030145">
    <property type="term" value="F:manganese ion binding"/>
    <property type="evidence" value="ECO:0007669"/>
    <property type="project" value="TreeGrafter"/>
</dbReference>
<dbReference type="GO" id="GO:0070402">
    <property type="term" value="F:NADPH binding"/>
    <property type="evidence" value="ECO:0007669"/>
    <property type="project" value="InterPro"/>
</dbReference>
<dbReference type="GO" id="GO:0051484">
    <property type="term" value="P:isopentenyl diphosphate biosynthetic process, methylerythritol 4-phosphate pathway involved in terpenoid biosynthetic process"/>
    <property type="evidence" value="ECO:0007669"/>
    <property type="project" value="TreeGrafter"/>
</dbReference>
<dbReference type="FunFam" id="3.40.50.720:FF:000045">
    <property type="entry name" value="1-deoxy-D-xylulose 5-phosphate reductoisomerase"/>
    <property type="match status" value="1"/>
</dbReference>
<dbReference type="Gene3D" id="1.10.1740.10">
    <property type="match status" value="1"/>
</dbReference>
<dbReference type="Gene3D" id="3.40.50.720">
    <property type="entry name" value="NAD(P)-binding Rossmann-like Domain"/>
    <property type="match status" value="1"/>
</dbReference>
<dbReference type="HAMAP" id="MF_00183">
    <property type="entry name" value="DXP_reductoisom"/>
    <property type="match status" value="1"/>
</dbReference>
<dbReference type="InterPro" id="IPR003821">
    <property type="entry name" value="DXP_reductoisomerase"/>
</dbReference>
<dbReference type="InterPro" id="IPR013644">
    <property type="entry name" value="DXP_reductoisomerase_C"/>
</dbReference>
<dbReference type="InterPro" id="IPR013512">
    <property type="entry name" value="DXP_reductoisomerase_N"/>
</dbReference>
<dbReference type="InterPro" id="IPR026877">
    <property type="entry name" value="DXPR_C"/>
</dbReference>
<dbReference type="InterPro" id="IPR036169">
    <property type="entry name" value="DXPR_C_sf"/>
</dbReference>
<dbReference type="InterPro" id="IPR036291">
    <property type="entry name" value="NAD(P)-bd_dom_sf"/>
</dbReference>
<dbReference type="NCBIfam" id="TIGR00243">
    <property type="entry name" value="Dxr"/>
    <property type="match status" value="1"/>
</dbReference>
<dbReference type="NCBIfam" id="NF003938">
    <property type="entry name" value="PRK05447.1-1"/>
    <property type="match status" value="1"/>
</dbReference>
<dbReference type="NCBIfam" id="NF009114">
    <property type="entry name" value="PRK12464.1"/>
    <property type="match status" value="1"/>
</dbReference>
<dbReference type="PANTHER" id="PTHR30525">
    <property type="entry name" value="1-DEOXY-D-XYLULOSE 5-PHOSPHATE REDUCTOISOMERASE"/>
    <property type="match status" value="1"/>
</dbReference>
<dbReference type="PANTHER" id="PTHR30525:SF0">
    <property type="entry name" value="1-DEOXY-D-XYLULOSE 5-PHOSPHATE REDUCTOISOMERASE, CHLOROPLASTIC"/>
    <property type="match status" value="1"/>
</dbReference>
<dbReference type="Pfam" id="PF08436">
    <property type="entry name" value="DXP_redisom_C"/>
    <property type="match status" value="1"/>
</dbReference>
<dbReference type="Pfam" id="PF02670">
    <property type="entry name" value="DXP_reductoisom"/>
    <property type="match status" value="1"/>
</dbReference>
<dbReference type="Pfam" id="PF13288">
    <property type="entry name" value="DXPR_C"/>
    <property type="match status" value="1"/>
</dbReference>
<dbReference type="PIRSF" id="PIRSF006205">
    <property type="entry name" value="Dxp_reductismrs"/>
    <property type="match status" value="1"/>
</dbReference>
<dbReference type="SUPFAM" id="SSF69055">
    <property type="entry name" value="1-deoxy-D-xylulose-5-phosphate reductoisomerase, C-terminal domain"/>
    <property type="match status" value="1"/>
</dbReference>
<dbReference type="SUPFAM" id="SSF55347">
    <property type="entry name" value="Glyceraldehyde-3-phosphate dehydrogenase-like, C-terminal domain"/>
    <property type="match status" value="1"/>
</dbReference>
<dbReference type="SUPFAM" id="SSF51735">
    <property type="entry name" value="NAD(P)-binding Rossmann-fold domains"/>
    <property type="match status" value="1"/>
</dbReference>
<gene>
    <name evidence="1" type="primary">dxr</name>
    <name type="ordered locus">PputW619_4076</name>
</gene>
<accession>B1JBQ4</accession>
<sequence length="396" mass="42286">MTAVQRITVLGATGSIGLSTLDVIARHPERYQVYALSGYTRIDQLLALCVLHCPAYAVVPNGEAAVRLREGLAAAGCATEVLEGEAGLCEVAAAPEVDAVMAAIVGAAGLRPTLAAVEAGKKVLLANKEALVMSGALFMEAVRRSGAVLLPIDSEHNAIFQCLPGDYDRGLSQVGVRRILLTASGGPFRETPQADLADVTPEQACAHPNWSMGRKISVDSASMMNKGLELIEACWLFDAAPDKVEVVVHPQSVIHSLVDYVDGSVLAQLGNPDMRTPIANALAWPERIDSGVAPLDLFAIARLDFQAPDELRFPCLRLARQAAEAGNSAPAVLNAANEVAVEAFLERRIRFPEIAGMIEQVLAQEPVVPVPSLDAVFAADQRARELSREWLRRHGR</sequence>
<proteinExistence type="inferred from homology"/>
<evidence type="ECO:0000255" key="1">
    <source>
        <dbReference type="HAMAP-Rule" id="MF_00183"/>
    </source>
</evidence>
<protein>
    <recommendedName>
        <fullName evidence="1">1-deoxy-D-xylulose 5-phosphate reductoisomerase</fullName>
        <shortName evidence="1">DXP reductoisomerase</shortName>
        <ecNumber evidence="1">1.1.1.267</ecNumber>
    </recommendedName>
    <alternativeName>
        <fullName evidence="1">1-deoxyxylulose-5-phosphate reductoisomerase</fullName>
    </alternativeName>
    <alternativeName>
        <fullName evidence="1">2-C-methyl-D-erythritol 4-phosphate synthase</fullName>
    </alternativeName>
</protein>
<keyword id="KW-0414">Isoprene biosynthesis</keyword>
<keyword id="KW-0464">Manganese</keyword>
<keyword id="KW-0479">Metal-binding</keyword>
<keyword id="KW-0521">NADP</keyword>
<keyword id="KW-0560">Oxidoreductase</keyword>
<feature type="chain" id="PRO_1000098511" description="1-deoxy-D-xylulose 5-phosphate reductoisomerase">
    <location>
        <begin position="1"/>
        <end position="396"/>
    </location>
</feature>
<feature type="binding site" evidence="1">
    <location>
        <position position="13"/>
    </location>
    <ligand>
        <name>NADPH</name>
        <dbReference type="ChEBI" id="CHEBI:57783"/>
    </ligand>
</feature>
<feature type="binding site" evidence="1">
    <location>
        <position position="14"/>
    </location>
    <ligand>
        <name>NADPH</name>
        <dbReference type="ChEBI" id="CHEBI:57783"/>
    </ligand>
</feature>
<feature type="binding site" evidence="1">
    <location>
        <position position="15"/>
    </location>
    <ligand>
        <name>NADPH</name>
        <dbReference type="ChEBI" id="CHEBI:57783"/>
    </ligand>
</feature>
<feature type="binding site" evidence="1">
    <location>
        <position position="16"/>
    </location>
    <ligand>
        <name>NADPH</name>
        <dbReference type="ChEBI" id="CHEBI:57783"/>
    </ligand>
</feature>
<feature type="binding site" evidence="1">
    <location>
        <position position="127"/>
    </location>
    <ligand>
        <name>NADPH</name>
        <dbReference type="ChEBI" id="CHEBI:57783"/>
    </ligand>
</feature>
<feature type="binding site" evidence="1">
    <location>
        <position position="128"/>
    </location>
    <ligand>
        <name>1-deoxy-D-xylulose 5-phosphate</name>
        <dbReference type="ChEBI" id="CHEBI:57792"/>
    </ligand>
</feature>
<feature type="binding site" evidence="1">
    <location>
        <position position="129"/>
    </location>
    <ligand>
        <name>NADPH</name>
        <dbReference type="ChEBI" id="CHEBI:57783"/>
    </ligand>
</feature>
<feature type="binding site" evidence="1">
    <location>
        <position position="153"/>
    </location>
    <ligand>
        <name>Mn(2+)</name>
        <dbReference type="ChEBI" id="CHEBI:29035"/>
    </ligand>
</feature>
<feature type="binding site" evidence="1">
    <location>
        <position position="154"/>
    </location>
    <ligand>
        <name>1-deoxy-D-xylulose 5-phosphate</name>
        <dbReference type="ChEBI" id="CHEBI:57792"/>
    </ligand>
</feature>
<feature type="binding site" evidence="1">
    <location>
        <position position="155"/>
    </location>
    <ligand>
        <name>1-deoxy-D-xylulose 5-phosphate</name>
        <dbReference type="ChEBI" id="CHEBI:57792"/>
    </ligand>
</feature>
<feature type="binding site" evidence="1">
    <location>
        <position position="155"/>
    </location>
    <ligand>
        <name>Mn(2+)</name>
        <dbReference type="ChEBI" id="CHEBI:29035"/>
    </ligand>
</feature>
<feature type="binding site" evidence="1">
    <location>
        <position position="184"/>
    </location>
    <ligand>
        <name>1-deoxy-D-xylulose 5-phosphate</name>
        <dbReference type="ChEBI" id="CHEBI:57792"/>
    </ligand>
</feature>
<feature type="binding site" evidence="1">
    <location>
        <position position="207"/>
    </location>
    <ligand>
        <name>1-deoxy-D-xylulose 5-phosphate</name>
        <dbReference type="ChEBI" id="CHEBI:57792"/>
    </ligand>
</feature>
<feature type="binding site" evidence="1">
    <location>
        <position position="213"/>
    </location>
    <ligand>
        <name>NADPH</name>
        <dbReference type="ChEBI" id="CHEBI:57783"/>
    </ligand>
</feature>
<feature type="binding site" evidence="1">
    <location>
        <position position="220"/>
    </location>
    <ligand>
        <name>1-deoxy-D-xylulose 5-phosphate</name>
        <dbReference type="ChEBI" id="CHEBI:57792"/>
    </ligand>
</feature>
<feature type="binding site" evidence="1">
    <location>
        <position position="225"/>
    </location>
    <ligand>
        <name>1-deoxy-D-xylulose 5-phosphate</name>
        <dbReference type="ChEBI" id="CHEBI:57792"/>
    </ligand>
</feature>
<feature type="binding site" evidence="1">
    <location>
        <position position="226"/>
    </location>
    <ligand>
        <name>1-deoxy-D-xylulose 5-phosphate</name>
        <dbReference type="ChEBI" id="CHEBI:57792"/>
    </ligand>
</feature>
<feature type="binding site" evidence="1">
    <location>
        <position position="229"/>
    </location>
    <ligand>
        <name>1-deoxy-D-xylulose 5-phosphate</name>
        <dbReference type="ChEBI" id="CHEBI:57792"/>
    </ligand>
</feature>
<feature type="binding site" evidence="1">
    <location>
        <position position="229"/>
    </location>
    <ligand>
        <name>Mn(2+)</name>
        <dbReference type="ChEBI" id="CHEBI:29035"/>
    </ligand>
</feature>